<organism>
    <name type="scientific">Streptomyces coelicolor (strain ATCC BAA-471 / A3(2) / M145)</name>
    <dbReference type="NCBI Taxonomy" id="100226"/>
    <lineage>
        <taxon>Bacteria</taxon>
        <taxon>Bacillati</taxon>
        <taxon>Actinomycetota</taxon>
        <taxon>Actinomycetes</taxon>
        <taxon>Kitasatosporales</taxon>
        <taxon>Streptomycetaceae</taxon>
        <taxon>Streptomyces</taxon>
        <taxon>Streptomyces albidoflavus group</taxon>
    </lineage>
</organism>
<gene>
    <name evidence="1" type="primary">nfi</name>
    <name type="ordered locus">SCO6726</name>
    <name type="ORF">SC5F2A.09</name>
</gene>
<reference key="1">
    <citation type="journal article" date="2002" name="Nature">
        <title>Complete genome sequence of the model actinomycete Streptomyces coelicolor A3(2).</title>
        <authorList>
            <person name="Bentley S.D."/>
            <person name="Chater K.F."/>
            <person name="Cerdeno-Tarraga A.-M."/>
            <person name="Challis G.L."/>
            <person name="Thomson N.R."/>
            <person name="James K.D."/>
            <person name="Harris D.E."/>
            <person name="Quail M.A."/>
            <person name="Kieser H."/>
            <person name="Harper D."/>
            <person name="Bateman A."/>
            <person name="Brown S."/>
            <person name="Chandra G."/>
            <person name="Chen C.W."/>
            <person name="Collins M."/>
            <person name="Cronin A."/>
            <person name="Fraser A."/>
            <person name="Goble A."/>
            <person name="Hidalgo J."/>
            <person name="Hornsby T."/>
            <person name="Howarth S."/>
            <person name="Huang C.-H."/>
            <person name="Kieser T."/>
            <person name="Larke L."/>
            <person name="Murphy L.D."/>
            <person name="Oliver K."/>
            <person name="O'Neil S."/>
            <person name="Rabbinowitsch E."/>
            <person name="Rajandream M.A."/>
            <person name="Rutherford K.M."/>
            <person name="Rutter S."/>
            <person name="Seeger K."/>
            <person name="Saunders D."/>
            <person name="Sharp S."/>
            <person name="Squares R."/>
            <person name="Squares S."/>
            <person name="Taylor K."/>
            <person name="Warren T."/>
            <person name="Wietzorrek A."/>
            <person name="Woodward J.R."/>
            <person name="Barrell B.G."/>
            <person name="Parkhill J."/>
            <person name="Hopwood D.A."/>
        </authorList>
    </citation>
    <scope>NUCLEOTIDE SEQUENCE [LARGE SCALE GENOMIC DNA]</scope>
    <source>
        <strain>ATCC BAA-471 / A3(2) / M145</strain>
    </source>
</reference>
<proteinExistence type="inferred from homology"/>
<keyword id="KW-0963">Cytoplasm</keyword>
<keyword id="KW-0227">DNA damage</keyword>
<keyword id="KW-0234">DNA repair</keyword>
<keyword id="KW-0255">Endonuclease</keyword>
<keyword id="KW-0378">Hydrolase</keyword>
<keyword id="KW-0460">Magnesium</keyword>
<keyword id="KW-0479">Metal-binding</keyword>
<keyword id="KW-0540">Nuclease</keyword>
<keyword id="KW-1185">Reference proteome</keyword>
<comment type="function">
    <text evidence="1">DNA repair enzyme involved in the repair of deaminated bases. Selectively cleaves double-stranded DNA at the second phosphodiester bond 3' to a deoxyinosine leaving behind the intact lesion on the nicked DNA.</text>
</comment>
<comment type="catalytic activity">
    <reaction evidence="1">
        <text>Endonucleolytic cleavage at apurinic or apyrimidinic sites to products with a 5'-phosphate.</text>
        <dbReference type="EC" id="3.1.21.7"/>
    </reaction>
</comment>
<comment type="cofactor">
    <cofactor evidence="1">
        <name>Mg(2+)</name>
        <dbReference type="ChEBI" id="CHEBI:18420"/>
    </cofactor>
</comment>
<comment type="subcellular location">
    <subcellularLocation>
        <location evidence="1">Cytoplasm</location>
    </subcellularLocation>
</comment>
<comment type="similarity">
    <text evidence="1">Belongs to the endonuclease V family.</text>
</comment>
<accession>Q9X7N2</accession>
<protein>
    <recommendedName>
        <fullName evidence="1">Endonuclease V</fullName>
        <ecNumber evidence="1">3.1.21.7</ecNumber>
    </recommendedName>
    <alternativeName>
        <fullName evidence="1">Deoxyinosine 3'endonuclease</fullName>
    </alternativeName>
    <alternativeName>
        <fullName evidence="1">Deoxyribonuclease V</fullName>
        <shortName evidence="1">DNase V</shortName>
    </alternativeName>
</protein>
<dbReference type="EC" id="3.1.21.7" evidence="1"/>
<dbReference type="EMBL" id="AL939129">
    <property type="protein sequence ID" value="CAB40676.1"/>
    <property type="molecule type" value="Genomic_DNA"/>
</dbReference>
<dbReference type="PIR" id="T35251">
    <property type="entry name" value="T35251"/>
</dbReference>
<dbReference type="RefSeq" id="NP_630799.1">
    <property type="nucleotide sequence ID" value="NC_003888.3"/>
</dbReference>
<dbReference type="RefSeq" id="WP_011031135.1">
    <property type="nucleotide sequence ID" value="NZ_VNID01000002.1"/>
</dbReference>
<dbReference type="SMR" id="Q9X7N2"/>
<dbReference type="STRING" id="100226.gene:17764384"/>
<dbReference type="PaxDb" id="100226-SCO6726"/>
<dbReference type="KEGG" id="sco:SCO6726"/>
<dbReference type="PATRIC" id="fig|100226.15.peg.6833"/>
<dbReference type="eggNOG" id="COG1515">
    <property type="taxonomic scope" value="Bacteria"/>
</dbReference>
<dbReference type="HOGENOM" id="CLU_047631_1_1_11"/>
<dbReference type="InParanoid" id="Q9X7N2"/>
<dbReference type="OrthoDB" id="9790916at2"/>
<dbReference type="PhylomeDB" id="Q9X7N2"/>
<dbReference type="Proteomes" id="UP000001973">
    <property type="component" value="Chromosome"/>
</dbReference>
<dbReference type="GO" id="GO:0005737">
    <property type="term" value="C:cytoplasm"/>
    <property type="evidence" value="ECO:0007669"/>
    <property type="project" value="UniProtKB-SubCell"/>
</dbReference>
<dbReference type="GO" id="GO:0043737">
    <property type="term" value="F:deoxyribonuclease V activity"/>
    <property type="evidence" value="ECO:0000318"/>
    <property type="project" value="GO_Central"/>
</dbReference>
<dbReference type="GO" id="GO:0000287">
    <property type="term" value="F:magnesium ion binding"/>
    <property type="evidence" value="ECO:0007669"/>
    <property type="project" value="UniProtKB-UniRule"/>
</dbReference>
<dbReference type="GO" id="GO:0016891">
    <property type="term" value="F:RNA endonuclease activity, producing 5'-phosphomonoesters"/>
    <property type="evidence" value="ECO:0000318"/>
    <property type="project" value="GO_Central"/>
</dbReference>
<dbReference type="GO" id="GO:0003727">
    <property type="term" value="F:single-stranded RNA binding"/>
    <property type="evidence" value="ECO:0000318"/>
    <property type="project" value="GO_Central"/>
</dbReference>
<dbReference type="GO" id="GO:0006281">
    <property type="term" value="P:DNA repair"/>
    <property type="evidence" value="ECO:0007669"/>
    <property type="project" value="UniProtKB-UniRule"/>
</dbReference>
<dbReference type="CDD" id="cd06559">
    <property type="entry name" value="Endonuclease_V"/>
    <property type="match status" value="1"/>
</dbReference>
<dbReference type="FunFam" id="3.30.2170.10:FF:000007">
    <property type="entry name" value="Endonuclease V"/>
    <property type="match status" value="1"/>
</dbReference>
<dbReference type="Gene3D" id="3.30.2170.10">
    <property type="entry name" value="archaeoglobus fulgidus dsm 4304 superfamily"/>
    <property type="match status" value="1"/>
</dbReference>
<dbReference type="HAMAP" id="MF_00801">
    <property type="entry name" value="Endonuclease_5"/>
    <property type="match status" value="1"/>
</dbReference>
<dbReference type="InterPro" id="IPR007581">
    <property type="entry name" value="Endonuclease-V"/>
</dbReference>
<dbReference type="PANTHER" id="PTHR28511">
    <property type="entry name" value="ENDONUCLEASE V"/>
    <property type="match status" value="1"/>
</dbReference>
<dbReference type="PANTHER" id="PTHR28511:SF1">
    <property type="entry name" value="ENDONUCLEASE V"/>
    <property type="match status" value="1"/>
</dbReference>
<dbReference type="Pfam" id="PF04493">
    <property type="entry name" value="Endonuclease_5"/>
    <property type="match status" value="1"/>
</dbReference>
<evidence type="ECO:0000255" key="1">
    <source>
        <dbReference type="HAMAP-Rule" id="MF_00801"/>
    </source>
</evidence>
<sequence length="233" mass="24313">MTTVSVQIPAGWPATEERARAVQDELRARVVLDEPGPPPGTGRVTGVDVAYDDERDVVAAAAVVLDAGTLAVVAEATAVGRISFPYVPGLLAFREIPTVLAALEALPCPPGLVVCDGYGLAHPRRFGLASHLGVLTGLPTIGVAKNPFTFTHDDPDTPRGSTSPLLAGAEEVGRAVRTRDGVKPVFVSVGHRVGLGNACAHTLALTPAYRLPETTRRADALCRAALRDAAYRA</sequence>
<name>NFI_STRCO</name>
<feature type="chain" id="PRO_0000159673" description="Endonuclease V">
    <location>
        <begin position="1"/>
        <end position="233"/>
    </location>
</feature>
<feature type="binding site" evidence="1">
    <location>
        <position position="48"/>
    </location>
    <ligand>
        <name>Mg(2+)</name>
        <dbReference type="ChEBI" id="CHEBI:18420"/>
    </ligand>
</feature>
<feature type="binding site" evidence="1">
    <location>
        <position position="116"/>
    </location>
    <ligand>
        <name>Mg(2+)</name>
        <dbReference type="ChEBI" id="CHEBI:18420"/>
    </ligand>
</feature>
<feature type="site" description="Interaction with target DNA" evidence="1">
    <location>
        <position position="86"/>
    </location>
</feature>